<evidence type="ECO:0000255" key="1">
    <source>
        <dbReference type="HAMAP-Rule" id="MF_00747"/>
    </source>
</evidence>
<keyword id="KW-0067">ATP-binding</keyword>
<keyword id="KW-0963">Cytoplasm</keyword>
<keyword id="KW-0329">Glyoxylate bypass</keyword>
<keyword id="KW-0378">Hydrolase</keyword>
<keyword id="KW-0418">Kinase</keyword>
<keyword id="KW-0547">Nucleotide-binding</keyword>
<keyword id="KW-0904">Protein phosphatase</keyword>
<keyword id="KW-0723">Serine/threonine-protein kinase</keyword>
<keyword id="KW-0808">Transferase</keyword>
<keyword id="KW-0816">Tricarboxylic acid cycle</keyword>
<reference key="1">
    <citation type="journal article" date="2009" name="PLoS Genet.">
        <title>Organised genome dynamics in the Escherichia coli species results in highly diverse adaptive paths.</title>
        <authorList>
            <person name="Touchon M."/>
            <person name="Hoede C."/>
            <person name="Tenaillon O."/>
            <person name="Barbe V."/>
            <person name="Baeriswyl S."/>
            <person name="Bidet P."/>
            <person name="Bingen E."/>
            <person name="Bonacorsi S."/>
            <person name="Bouchier C."/>
            <person name="Bouvet O."/>
            <person name="Calteau A."/>
            <person name="Chiapello H."/>
            <person name="Clermont O."/>
            <person name="Cruveiller S."/>
            <person name="Danchin A."/>
            <person name="Diard M."/>
            <person name="Dossat C."/>
            <person name="Karoui M.E."/>
            <person name="Frapy E."/>
            <person name="Garry L."/>
            <person name="Ghigo J.M."/>
            <person name="Gilles A.M."/>
            <person name="Johnson J."/>
            <person name="Le Bouguenec C."/>
            <person name="Lescat M."/>
            <person name="Mangenot S."/>
            <person name="Martinez-Jehanne V."/>
            <person name="Matic I."/>
            <person name="Nassif X."/>
            <person name="Oztas S."/>
            <person name="Petit M.A."/>
            <person name="Pichon C."/>
            <person name="Rouy Z."/>
            <person name="Ruf C.S."/>
            <person name="Schneider D."/>
            <person name="Tourret J."/>
            <person name="Vacherie B."/>
            <person name="Vallenet D."/>
            <person name="Medigue C."/>
            <person name="Rocha E.P.C."/>
            <person name="Denamur E."/>
        </authorList>
    </citation>
    <scope>NUCLEOTIDE SEQUENCE [LARGE SCALE GENOMIC DNA]</scope>
    <source>
        <strain>IAI1</strain>
    </source>
</reference>
<dbReference type="EC" id="2.7.11.5" evidence="1"/>
<dbReference type="EC" id="3.1.3.-" evidence="1"/>
<dbReference type="EMBL" id="CU928160">
    <property type="protein sequence ID" value="CAR00987.1"/>
    <property type="molecule type" value="Genomic_DNA"/>
</dbReference>
<dbReference type="RefSeq" id="WP_001137214.1">
    <property type="nucleotide sequence ID" value="NC_011741.1"/>
</dbReference>
<dbReference type="SMR" id="B7M7S1"/>
<dbReference type="GeneID" id="75204156"/>
<dbReference type="KEGG" id="ecr:ECIAI1_4237"/>
<dbReference type="HOGENOM" id="CLU_033804_1_1_6"/>
<dbReference type="GO" id="GO:0005737">
    <property type="term" value="C:cytoplasm"/>
    <property type="evidence" value="ECO:0007669"/>
    <property type="project" value="UniProtKB-SubCell"/>
</dbReference>
<dbReference type="GO" id="GO:0008772">
    <property type="term" value="F:[isocitrate dehydrogenase (NADP+)] kinase activity"/>
    <property type="evidence" value="ECO:0007669"/>
    <property type="project" value="UniProtKB-UniRule"/>
</dbReference>
<dbReference type="GO" id="GO:0016208">
    <property type="term" value="F:AMP binding"/>
    <property type="evidence" value="ECO:0007669"/>
    <property type="project" value="TreeGrafter"/>
</dbReference>
<dbReference type="GO" id="GO:0005524">
    <property type="term" value="F:ATP binding"/>
    <property type="evidence" value="ECO:0007669"/>
    <property type="project" value="UniProtKB-UniRule"/>
</dbReference>
<dbReference type="GO" id="GO:0004721">
    <property type="term" value="F:phosphoprotein phosphatase activity"/>
    <property type="evidence" value="ECO:0007669"/>
    <property type="project" value="UniProtKB-KW"/>
</dbReference>
<dbReference type="GO" id="GO:0004674">
    <property type="term" value="F:protein serine/threonine kinase activity"/>
    <property type="evidence" value="ECO:0007669"/>
    <property type="project" value="UniProtKB-KW"/>
</dbReference>
<dbReference type="GO" id="GO:0006006">
    <property type="term" value="P:glucose metabolic process"/>
    <property type="evidence" value="ECO:0007669"/>
    <property type="project" value="InterPro"/>
</dbReference>
<dbReference type="GO" id="GO:0006097">
    <property type="term" value="P:glyoxylate cycle"/>
    <property type="evidence" value="ECO:0007669"/>
    <property type="project" value="UniProtKB-UniRule"/>
</dbReference>
<dbReference type="GO" id="GO:0006099">
    <property type="term" value="P:tricarboxylic acid cycle"/>
    <property type="evidence" value="ECO:0007669"/>
    <property type="project" value="UniProtKB-UniRule"/>
</dbReference>
<dbReference type="HAMAP" id="MF_00747">
    <property type="entry name" value="AceK"/>
    <property type="match status" value="1"/>
</dbReference>
<dbReference type="InterPro" id="IPR046855">
    <property type="entry name" value="AceK_kinase"/>
</dbReference>
<dbReference type="InterPro" id="IPR046854">
    <property type="entry name" value="AceK_regulatory"/>
</dbReference>
<dbReference type="InterPro" id="IPR010452">
    <property type="entry name" value="Isocitrate_DH_AceK"/>
</dbReference>
<dbReference type="NCBIfam" id="NF002804">
    <property type="entry name" value="PRK02946.1"/>
    <property type="match status" value="1"/>
</dbReference>
<dbReference type="PANTHER" id="PTHR39559">
    <property type="match status" value="1"/>
</dbReference>
<dbReference type="PANTHER" id="PTHR39559:SF1">
    <property type="entry name" value="ISOCITRATE DEHYDROGENASE KINASE_PHOSPHATASE"/>
    <property type="match status" value="1"/>
</dbReference>
<dbReference type="Pfam" id="PF06315">
    <property type="entry name" value="AceK_kinase"/>
    <property type="match status" value="1"/>
</dbReference>
<dbReference type="Pfam" id="PF20423">
    <property type="entry name" value="AceK_regulatory"/>
    <property type="match status" value="1"/>
</dbReference>
<dbReference type="PIRSF" id="PIRSF000719">
    <property type="entry name" value="AceK"/>
    <property type="match status" value="1"/>
</dbReference>
<comment type="function">
    <text evidence="1">Bifunctional enzyme which can phosphorylate or dephosphorylate isocitrate dehydrogenase (IDH) on a specific serine residue. This is a regulatory mechanism which enables bacteria to bypass the Krebs cycle via the glyoxylate shunt in response to the source of carbon. When bacteria are grown on glucose, IDH is fully active and unphosphorylated, but when grown on acetate or ethanol, the activity of IDH declines drastically concomitant with its phosphorylation.</text>
</comment>
<comment type="catalytic activity">
    <reaction evidence="1">
        <text>L-seryl-[isocitrate dehydrogenase] + ATP = O-phospho-L-seryl-[isocitrate dehydrogenase] + ADP + H(+)</text>
        <dbReference type="Rhea" id="RHEA:43540"/>
        <dbReference type="Rhea" id="RHEA-COMP:10605"/>
        <dbReference type="Rhea" id="RHEA-COMP:10606"/>
        <dbReference type="ChEBI" id="CHEBI:15378"/>
        <dbReference type="ChEBI" id="CHEBI:29999"/>
        <dbReference type="ChEBI" id="CHEBI:30616"/>
        <dbReference type="ChEBI" id="CHEBI:83421"/>
        <dbReference type="ChEBI" id="CHEBI:456216"/>
        <dbReference type="EC" id="2.7.11.5"/>
    </reaction>
</comment>
<comment type="subcellular location">
    <subcellularLocation>
        <location evidence="1">Cytoplasm</location>
    </subcellularLocation>
</comment>
<comment type="similarity">
    <text evidence="1">Belongs to the AceK family.</text>
</comment>
<protein>
    <recommendedName>
        <fullName evidence="1">Isocitrate dehydrogenase kinase/phosphatase</fullName>
        <shortName evidence="1">IDH kinase/phosphatase</shortName>
        <shortName evidence="1">IDHK/P</shortName>
        <ecNumber evidence="1">2.7.11.5</ecNumber>
        <ecNumber evidence="1">3.1.3.-</ecNumber>
    </recommendedName>
</protein>
<sequence>MPRGLELLIAQTILQGFDAQYGRFLEVTSGAQQRFEQADWHAVQQAMKNRIHLYDHHVGLVVEQLRCITNGQSTDAAFLLRVKEHYTRLLPDYPRFEIAESFFNSVYCRLFDHRSLTPERLFIFSSQPERRFRTIPRPLAKDFHPDHGWESLLMRVISDLPLRLRWQNKSRDIHYIIRHLTETLGTDNLAESHLQVANELFYRNKAAWLVGKLITPSGTLPFLLPIHQTDDGELFIDTCLTTTAEASIVFGFARSYFMVYAPLPAALVEWLREILPGKTTAELYMAIGCQKHAKTESYREYLVYLQGCNEQFIEAPGIRGMVMLVFTLPGFDRVFKVIKDKFAPQKEMSAAHVRACYQLVKEHDRVGRMADTQEFENFVLEKRHISPALMELLLQEAAEKITDLGEQIVIRHLYIERRMVPLNIWLEQVEGQQLRDAIEEYGNAIRQLAAANIFPGDMLFKNFGVTRHGRVVFYDYDEICYMTEVNFRDIPPPRYPEDELASEPWYSVSPGDVFPEEFRHWLCADPRIGPLFEEMHADLFRADYWRALQNRIREGHVEDVYAYRRRQRFSVRYGEMLF</sequence>
<gene>
    <name evidence="1" type="primary">aceK</name>
    <name type="ordered locus">ECIAI1_4237</name>
</gene>
<organism>
    <name type="scientific">Escherichia coli O8 (strain IAI1)</name>
    <dbReference type="NCBI Taxonomy" id="585034"/>
    <lineage>
        <taxon>Bacteria</taxon>
        <taxon>Pseudomonadati</taxon>
        <taxon>Pseudomonadota</taxon>
        <taxon>Gammaproteobacteria</taxon>
        <taxon>Enterobacterales</taxon>
        <taxon>Enterobacteriaceae</taxon>
        <taxon>Escherichia</taxon>
    </lineage>
</organism>
<proteinExistence type="inferred from homology"/>
<accession>B7M7S1</accession>
<name>ACEK_ECO8A</name>
<feature type="chain" id="PRO_1000133266" description="Isocitrate dehydrogenase kinase/phosphatase">
    <location>
        <begin position="1"/>
        <end position="578"/>
    </location>
</feature>
<feature type="active site" evidence="1">
    <location>
        <position position="371"/>
    </location>
</feature>
<feature type="binding site" evidence="1">
    <location>
        <begin position="315"/>
        <end position="321"/>
    </location>
    <ligand>
        <name>ATP</name>
        <dbReference type="ChEBI" id="CHEBI:30616"/>
    </ligand>
</feature>
<feature type="binding site" evidence="1">
    <location>
        <position position="336"/>
    </location>
    <ligand>
        <name>ATP</name>
        <dbReference type="ChEBI" id="CHEBI:30616"/>
    </ligand>
</feature>